<name>CGR1_CANGA</name>
<gene>
    <name type="primary">CGR1</name>
    <name type="ordered locus">CAGL0E02937g</name>
</gene>
<accession>Q6FVC7</accession>
<protein>
    <recommendedName>
        <fullName>rRNA-processing protein CGR1</fullName>
    </recommendedName>
</protein>
<proteinExistence type="inferred from homology"/>
<sequence length="114" mass="14109">MVEEEAKGLPVSKRVWKQEKEPLRANSRVVKNKKLTSWELKKQKRLEEQQYKERLKALKDEKLETKRQQIEAMKLRREKKEEKERYERLAAKMHAKKVERLRRREKRNKALKER</sequence>
<keyword id="KW-0175">Coiled coil</keyword>
<keyword id="KW-0539">Nucleus</keyword>
<keyword id="KW-1185">Reference proteome</keyword>
<keyword id="KW-0690">Ribosome biogenesis</keyword>
<keyword id="KW-0698">rRNA processing</keyword>
<dbReference type="EMBL" id="CR380951">
    <property type="protein sequence ID" value="CAG58736.1"/>
    <property type="molecule type" value="Genomic_DNA"/>
</dbReference>
<dbReference type="RefSeq" id="XP_445817.1">
    <property type="nucleotide sequence ID" value="XM_445817.1"/>
</dbReference>
<dbReference type="SMR" id="Q6FVC7"/>
<dbReference type="FunCoup" id="Q6FVC7">
    <property type="interactions" value="167"/>
</dbReference>
<dbReference type="STRING" id="284593.Q6FVC7"/>
<dbReference type="EnsemblFungi" id="CAGL0E02937g-T">
    <property type="protein sequence ID" value="CAGL0E02937g-T-p1"/>
    <property type="gene ID" value="CAGL0E02937g"/>
</dbReference>
<dbReference type="KEGG" id="cgr:2887426"/>
<dbReference type="CGD" id="CAL0128582">
    <property type="gene designation" value="CAGL0E02937g"/>
</dbReference>
<dbReference type="VEuPathDB" id="FungiDB:B1J91_E02937g"/>
<dbReference type="VEuPathDB" id="FungiDB:CAGL0E02937g"/>
<dbReference type="eggNOG" id="ENOG502S7VB">
    <property type="taxonomic scope" value="Eukaryota"/>
</dbReference>
<dbReference type="HOGENOM" id="CLU_125051_0_1_1"/>
<dbReference type="InParanoid" id="Q6FVC7"/>
<dbReference type="OMA" id="NGKQWHD"/>
<dbReference type="Proteomes" id="UP000002428">
    <property type="component" value="Chromosome E"/>
</dbReference>
<dbReference type="GO" id="GO:0005730">
    <property type="term" value="C:nucleolus"/>
    <property type="evidence" value="ECO:0007669"/>
    <property type="project" value="UniProtKB-SubCell"/>
</dbReference>
<dbReference type="GO" id="GO:0006364">
    <property type="term" value="P:rRNA processing"/>
    <property type="evidence" value="ECO:0007669"/>
    <property type="project" value="UniProtKB-KW"/>
</dbReference>
<dbReference type="InterPro" id="IPR005579">
    <property type="entry name" value="Cgr1-like"/>
</dbReference>
<dbReference type="Pfam" id="PF03879">
    <property type="entry name" value="Cgr1"/>
    <property type="match status" value="1"/>
</dbReference>
<comment type="function">
    <text evidence="1">Involved in nucleolar integrity and required for processing of the pre-rRNA for the 60S ribosome subunit.</text>
</comment>
<comment type="subcellular location">
    <subcellularLocation>
        <location evidence="1">Nucleus</location>
        <location evidence="1">Nucleolus</location>
    </subcellularLocation>
</comment>
<comment type="similarity">
    <text evidence="3">Belongs to the CGR1 family.</text>
</comment>
<organism>
    <name type="scientific">Candida glabrata (strain ATCC 2001 / BCRC 20586 / JCM 3761 / NBRC 0622 / NRRL Y-65 / CBS 138)</name>
    <name type="common">Yeast</name>
    <name type="synonym">Nakaseomyces glabratus</name>
    <dbReference type="NCBI Taxonomy" id="284593"/>
    <lineage>
        <taxon>Eukaryota</taxon>
        <taxon>Fungi</taxon>
        <taxon>Dikarya</taxon>
        <taxon>Ascomycota</taxon>
        <taxon>Saccharomycotina</taxon>
        <taxon>Saccharomycetes</taxon>
        <taxon>Saccharomycetales</taxon>
        <taxon>Saccharomycetaceae</taxon>
        <taxon>Nakaseomyces</taxon>
    </lineage>
</organism>
<evidence type="ECO:0000250" key="1"/>
<evidence type="ECO:0000255" key="2"/>
<evidence type="ECO:0000305" key="3"/>
<reference key="1">
    <citation type="journal article" date="2004" name="Nature">
        <title>Genome evolution in yeasts.</title>
        <authorList>
            <person name="Dujon B."/>
            <person name="Sherman D."/>
            <person name="Fischer G."/>
            <person name="Durrens P."/>
            <person name="Casaregola S."/>
            <person name="Lafontaine I."/>
            <person name="de Montigny J."/>
            <person name="Marck C."/>
            <person name="Neuveglise C."/>
            <person name="Talla E."/>
            <person name="Goffard N."/>
            <person name="Frangeul L."/>
            <person name="Aigle M."/>
            <person name="Anthouard V."/>
            <person name="Babour A."/>
            <person name="Barbe V."/>
            <person name="Barnay S."/>
            <person name="Blanchin S."/>
            <person name="Beckerich J.-M."/>
            <person name="Beyne E."/>
            <person name="Bleykasten C."/>
            <person name="Boisrame A."/>
            <person name="Boyer J."/>
            <person name="Cattolico L."/>
            <person name="Confanioleri F."/>
            <person name="de Daruvar A."/>
            <person name="Despons L."/>
            <person name="Fabre E."/>
            <person name="Fairhead C."/>
            <person name="Ferry-Dumazet H."/>
            <person name="Groppi A."/>
            <person name="Hantraye F."/>
            <person name="Hennequin C."/>
            <person name="Jauniaux N."/>
            <person name="Joyet P."/>
            <person name="Kachouri R."/>
            <person name="Kerrest A."/>
            <person name="Koszul R."/>
            <person name="Lemaire M."/>
            <person name="Lesur I."/>
            <person name="Ma L."/>
            <person name="Muller H."/>
            <person name="Nicaud J.-M."/>
            <person name="Nikolski M."/>
            <person name="Oztas S."/>
            <person name="Ozier-Kalogeropoulos O."/>
            <person name="Pellenz S."/>
            <person name="Potier S."/>
            <person name="Richard G.-F."/>
            <person name="Straub M.-L."/>
            <person name="Suleau A."/>
            <person name="Swennen D."/>
            <person name="Tekaia F."/>
            <person name="Wesolowski-Louvel M."/>
            <person name="Westhof E."/>
            <person name="Wirth B."/>
            <person name="Zeniou-Meyer M."/>
            <person name="Zivanovic Y."/>
            <person name="Bolotin-Fukuhara M."/>
            <person name="Thierry A."/>
            <person name="Bouchier C."/>
            <person name="Caudron B."/>
            <person name="Scarpelli C."/>
            <person name="Gaillardin C."/>
            <person name="Weissenbach J."/>
            <person name="Wincker P."/>
            <person name="Souciet J.-L."/>
        </authorList>
    </citation>
    <scope>NUCLEOTIDE SEQUENCE [LARGE SCALE GENOMIC DNA]</scope>
    <source>
        <strain>ATCC 2001 / BCRC 20586 / JCM 3761 / NBRC 0622 / NRRL Y-65 / CBS 138</strain>
    </source>
</reference>
<feature type="chain" id="PRO_0000278950" description="rRNA-processing protein CGR1">
    <location>
        <begin position="1"/>
        <end position="114"/>
    </location>
</feature>
<feature type="coiled-coil region" evidence="2">
    <location>
        <begin position="39"/>
        <end position="100"/>
    </location>
</feature>